<accession>B7N1A1</accession>
<keyword id="KW-0007">Acetylation</keyword>
<keyword id="KW-0687">Ribonucleoprotein</keyword>
<keyword id="KW-0689">Ribosomal protein</keyword>
<keyword id="KW-0694">RNA-binding</keyword>
<keyword id="KW-0699">rRNA-binding</keyword>
<sequence>MAVVKCKPTSPGRRHVVKVVNPELHKGKPFAPLLEKNSKSGGRNNNGRITTRHIGGGHKQAYRIVDFKRNKDGIPAVVERLEYDPNRSANIALVLYKDGERRYILAPKGLKAGDQIQSGVDAAIKPGNTLPMRNIPVGSTVHNVEMKPGKGGQLARSAGTYVQIVARDGAYVTLRLRSGEMRKVEADCRATLGEVGNAEHMLRVLGKAGAARWRGVRPTVRGTAMNPVDHPHGGGEGRNFGKHPVTPWGVQTKGKKTRSNKRTDKFIVRRRSK</sequence>
<evidence type="ECO:0000255" key="1">
    <source>
        <dbReference type="HAMAP-Rule" id="MF_01320"/>
    </source>
</evidence>
<evidence type="ECO:0000256" key="2">
    <source>
        <dbReference type="SAM" id="MobiDB-lite"/>
    </source>
</evidence>
<evidence type="ECO:0000305" key="3"/>
<dbReference type="EMBL" id="CU928162">
    <property type="protein sequence ID" value="CAR10119.2"/>
    <property type="molecule type" value="Genomic_DNA"/>
</dbReference>
<dbReference type="RefSeq" id="WP_000301864.1">
    <property type="nucleotide sequence ID" value="NC_011745.1"/>
</dbReference>
<dbReference type="SMR" id="B7N1A1"/>
<dbReference type="GeneID" id="93778670"/>
<dbReference type="KEGG" id="ecq:ECED1_3980"/>
<dbReference type="HOGENOM" id="CLU_036235_2_1_6"/>
<dbReference type="Proteomes" id="UP000000748">
    <property type="component" value="Chromosome"/>
</dbReference>
<dbReference type="GO" id="GO:0005829">
    <property type="term" value="C:cytosol"/>
    <property type="evidence" value="ECO:0007669"/>
    <property type="project" value="UniProtKB-ARBA"/>
</dbReference>
<dbReference type="GO" id="GO:0015934">
    <property type="term" value="C:large ribosomal subunit"/>
    <property type="evidence" value="ECO:0007669"/>
    <property type="project" value="InterPro"/>
</dbReference>
<dbReference type="GO" id="GO:0019843">
    <property type="term" value="F:rRNA binding"/>
    <property type="evidence" value="ECO:0007669"/>
    <property type="project" value="UniProtKB-UniRule"/>
</dbReference>
<dbReference type="GO" id="GO:0003735">
    <property type="term" value="F:structural constituent of ribosome"/>
    <property type="evidence" value="ECO:0007669"/>
    <property type="project" value="InterPro"/>
</dbReference>
<dbReference type="GO" id="GO:0016740">
    <property type="term" value="F:transferase activity"/>
    <property type="evidence" value="ECO:0007669"/>
    <property type="project" value="InterPro"/>
</dbReference>
<dbReference type="GO" id="GO:0002181">
    <property type="term" value="P:cytoplasmic translation"/>
    <property type="evidence" value="ECO:0007669"/>
    <property type="project" value="TreeGrafter"/>
</dbReference>
<dbReference type="FunFam" id="2.30.30.30:FF:000001">
    <property type="entry name" value="50S ribosomal protein L2"/>
    <property type="match status" value="1"/>
</dbReference>
<dbReference type="FunFam" id="2.40.50.140:FF:000003">
    <property type="entry name" value="50S ribosomal protein L2"/>
    <property type="match status" value="1"/>
</dbReference>
<dbReference type="FunFam" id="4.10.950.10:FF:000001">
    <property type="entry name" value="50S ribosomal protein L2"/>
    <property type="match status" value="1"/>
</dbReference>
<dbReference type="Gene3D" id="2.30.30.30">
    <property type="match status" value="1"/>
</dbReference>
<dbReference type="Gene3D" id="2.40.50.140">
    <property type="entry name" value="Nucleic acid-binding proteins"/>
    <property type="match status" value="1"/>
</dbReference>
<dbReference type="Gene3D" id="4.10.950.10">
    <property type="entry name" value="Ribosomal protein L2, domain 3"/>
    <property type="match status" value="1"/>
</dbReference>
<dbReference type="HAMAP" id="MF_01320_B">
    <property type="entry name" value="Ribosomal_uL2_B"/>
    <property type="match status" value="1"/>
</dbReference>
<dbReference type="InterPro" id="IPR012340">
    <property type="entry name" value="NA-bd_OB-fold"/>
</dbReference>
<dbReference type="InterPro" id="IPR014722">
    <property type="entry name" value="Rib_uL2_dom2"/>
</dbReference>
<dbReference type="InterPro" id="IPR002171">
    <property type="entry name" value="Ribosomal_uL2"/>
</dbReference>
<dbReference type="InterPro" id="IPR005880">
    <property type="entry name" value="Ribosomal_uL2_bac/org-type"/>
</dbReference>
<dbReference type="InterPro" id="IPR022669">
    <property type="entry name" value="Ribosomal_uL2_C"/>
</dbReference>
<dbReference type="InterPro" id="IPR022671">
    <property type="entry name" value="Ribosomal_uL2_CS"/>
</dbReference>
<dbReference type="InterPro" id="IPR014726">
    <property type="entry name" value="Ribosomal_uL2_dom3"/>
</dbReference>
<dbReference type="InterPro" id="IPR022666">
    <property type="entry name" value="Ribosomal_uL2_RNA-bd_dom"/>
</dbReference>
<dbReference type="InterPro" id="IPR008991">
    <property type="entry name" value="Translation_prot_SH3-like_sf"/>
</dbReference>
<dbReference type="NCBIfam" id="TIGR01171">
    <property type="entry name" value="rplB_bact"/>
    <property type="match status" value="1"/>
</dbReference>
<dbReference type="PANTHER" id="PTHR13691:SF5">
    <property type="entry name" value="LARGE RIBOSOMAL SUBUNIT PROTEIN UL2M"/>
    <property type="match status" value="1"/>
</dbReference>
<dbReference type="PANTHER" id="PTHR13691">
    <property type="entry name" value="RIBOSOMAL PROTEIN L2"/>
    <property type="match status" value="1"/>
</dbReference>
<dbReference type="Pfam" id="PF00181">
    <property type="entry name" value="Ribosomal_L2"/>
    <property type="match status" value="1"/>
</dbReference>
<dbReference type="Pfam" id="PF03947">
    <property type="entry name" value="Ribosomal_L2_C"/>
    <property type="match status" value="1"/>
</dbReference>
<dbReference type="PIRSF" id="PIRSF002158">
    <property type="entry name" value="Ribosomal_L2"/>
    <property type="match status" value="1"/>
</dbReference>
<dbReference type="SMART" id="SM01383">
    <property type="entry name" value="Ribosomal_L2"/>
    <property type="match status" value="1"/>
</dbReference>
<dbReference type="SMART" id="SM01382">
    <property type="entry name" value="Ribosomal_L2_C"/>
    <property type="match status" value="1"/>
</dbReference>
<dbReference type="SUPFAM" id="SSF50249">
    <property type="entry name" value="Nucleic acid-binding proteins"/>
    <property type="match status" value="1"/>
</dbReference>
<dbReference type="SUPFAM" id="SSF50104">
    <property type="entry name" value="Translation proteins SH3-like domain"/>
    <property type="match status" value="1"/>
</dbReference>
<dbReference type="PROSITE" id="PS00467">
    <property type="entry name" value="RIBOSOMAL_L2"/>
    <property type="match status" value="1"/>
</dbReference>
<gene>
    <name evidence="1" type="primary">rplB</name>
    <name type="ordered locus">ECED1_3980</name>
</gene>
<protein>
    <recommendedName>
        <fullName evidence="1">Large ribosomal subunit protein uL2</fullName>
    </recommendedName>
    <alternativeName>
        <fullName evidence="3">50S ribosomal protein L2</fullName>
    </alternativeName>
</protein>
<proteinExistence type="inferred from homology"/>
<organism>
    <name type="scientific">Escherichia coli O81 (strain ED1a)</name>
    <dbReference type="NCBI Taxonomy" id="585397"/>
    <lineage>
        <taxon>Bacteria</taxon>
        <taxon>Pseudomonadati</taxon>
        <taxon>Pseudomonadota</taxon>
        <taxon>Gammaproteobacteria</taxon>
        <taxon>Enterobacterales</taxon>
        <taxon>Enterobacteriaceae</taxon>
        <taxon>Escherichia</taxon>
    </lineage>
</organism>
<comment type="function">
    <text evidence="1">One of the primary rRNA binding proteins. Required for association of the 30S and 50S subunits to form the 70S ribosome, for tRNA binding and peptide bond formation. It has been suggested to have peptidyltransferase activity; this is somewhat controversial. Makes several contacts with the 16S rRNA in the 70S ribosome.</text>
</comment>
<comment type="subunit">
    <text evidence="1">Part of the 50S ribosomal subunit. Forms a bridge to the 30S subunit in the 70S ribosome.</text>
</comment>
<comment type="similarity">
    <text evidence="1">Belongs to the universal ribosomal protein uL2 family.</text>
</comment>
<feature type="chain" id="PRO_1000165749" description="Large ribosomal subunit protein uL2">
    <location>
        <begin position="1"/>
        <end position="273"/>
    </location>
</feature>
<feature type="region of interest" description="Disordered" evidence="2">
    <location>
        <begin position="28"/>
        <end position="53"/>
    </location>
</feature>
<feature type="region of interest" description="Disordered" evidence="2">
    <location>
        <begin position="221"/>
        <end position="273"/>
    </location>
</feature>
<feature type="compositionally biased region" description="Low complexity" evidence="2">
    <location>
        <begin position="39"/>
        <end position="48"/>
    </location>
</feature>
<feature type="modified residue" description="N6-acetyllysine" evidence="1">
    <location>
        <position position="242"/>
    </location>
</feature>
<name>RL2_ECO81</name>
<reference key="1">
    <citation type="journal article" date="2009" name="PLoS Genet.">
        <title>Organised genome dynamics in the Escherichia coli species results in highly diverse adaptive paths.</title>
        <authorList>
            <person name="Touchon M."/>
            <person name="Hoede C."/>
            <person name="Tenaillon O."/>
            <person name="Barbe V."/>
            <person name="Baeriswyl S."/>
            <person name="Bidet P."/>
            <person name="Bingen E."/>
            <person name="Bonacorsi S."/>
            <person name="Bouchier C."/>
            <person name="Bouvet O."/>
            <person name="Calteau A."/>
            <person name="Chiapello H."/>
            <person name="Clermont O."/>
            <person name="Cruveiller S."/>
            <person name="Danchin A."/>
            <person name="Diard M."/>
            <person name="Dossat C."/>
            <person name="Karoui M.E."/>
            <person name="Frapy E."/>
            <person name="Garry L."/>
            <person name="Ghigo J.M."/>
            <person name="Gilles A.M."/>
            <person name="Johnson J."/>
            <person name="Le Bouguenec C."/>
            <person name="Lescat M."/>
            <person name="Mangenot S."/>
            <person name="Martinez-Jehanne V."/>
            <person name="Matic I."/>
            <person name="Nassif X."/>
            <person name="Oztas S."/>
            <person name="Petit M.A."/>
            <person name="Pichon C."/>
            <person name="Rouy Z."/>
            <person name="Ruf C.S."/>
            <person name="Schneider D."/>
            <person name="Tourret J."/>
            <person name="Vacherie B."/>
            <person name="Vallenet D."/>
            <person name="Medigue C."/>
            <person name="Rocha E.P.C."/>
            <person name="Denamur E."/>
        </authorList>
    </citation>
    <scope>NUCLEOTIDE SEQUENCE [LARGE SCALE GENOMIC DNA]</scope>
    <source>
        <strain>ED1a</strain>
    </source>
</reference>